<protein>
    <recommendedName>
        <fullName evidence="1">Phospholipase D</fullName>
        <shortName evidence="1">PLD</shortName>
        <shortName>PLD-A</shortName>
        <ecNumber evidence="1">3.1.4.-</ecNumber>
    </recommendedName>
    <alternativeName>
        <fullName>Choline phosphatase</fullName>
    </alternativeName>
    <alternativeName>
        <fullName evidence="1">Sphingomyelinase D</fullName>
        <shortName evidence="1">SMaseD</shortName>
        <ecNumber evidence="1">3.1.4.41</ecNumber>
    </alternativeName>
</protein>
<organism>
    <name type="scientific">Arcanobacterium haemolyticum (strain ATCC 9345 / DSM 20595 / CCM 5947 / CCUG 17215 / LMG 16163 / NBRC 15585 / NCTC 8452 / 11018)</name>
    <dbReference type="NCBI Taxonomy" id="644284"/>
    <lineage>
        <taxon>Bacteria</taxon>
        <taxon>Bacillati</taxon>
        <taxon>Actinomycetota</taxon>
        <taxon>Actinomycetes</taxon>
        <taxon>Actinomycetales</taxon>
        <taxon>Actinomycetaceae</taxon>
        <taxon>Arcanobacterium</taxon>
    </lineage>
</organism>
<accession>Q59121</accession>
<accession>D7BPG4</accession>
<feature type="signal peptide" evidence="1">
    <location>
        <begin position="1"/>
        <end position="26"/>
    </location>
</feature>
<feature type="chain" id="PRO_0000022065" description="Phospholipase D">
    <location>
        <begin position="27"/>
        <end position="309"/>
    </location>
</feature>
<feature type="active site" evidence="2">
    <location>
        <position position="46"/>
    </location>
</feature>
<proteinExistence type="inferred from homology"/>
<sequence length="309" mass="34663">MKTRKKIALALSLLTGFMLPIGSAAAAPLAQEQPTTGNRPVYAIAHRVLTKQSVDDAIKIGANALEIDFTAWRRGWWADHDGLPTSAGDTAEDILKYIAQKRREGNNITFVWFDIKNPDYCKDQNSVCSITKLRDLARQTIEQEGVRALFGFYKTVGGVGWNTIANNLNDKEAVALSGRKDDIMKDFKQYENKIKPQQRVADNGYYNLSYGFGGCYRDENQTCDQLRLAGEERKKGNLGKTFGWTVSTGQEYLAADLLNKAEVDGMIFGFKTTYFYDHADTRNAFAGIKNWVDAHQGTHHMATNKDIPW</sequence>
<comment type="function">
    <text evidence="1">Virulence factor affecting bacterial dissemination and survival within the host. Has magnesium-dependent catalytic activity toward sphingomyelin (SM) and acyl- and alkyl-lysophosphatidylcholine (LPC), but not toward sphingosylphosphorylcholine (SPC) and phosphatidylcholine (PC). Lysophosphatidic acid (LPA), assumed to result from LPC hydrolysis, evokes pathophysiological responses after LPA receptor internalization. Shows hemolytic activity.</text>
</comment>
<comment type="catalytic activity">
    <reaction evidence="1">
        <text>a sphingomyelin + H2O = an N-acylsphing-4-enine 1-phosphate + choline + H(+)</text>
        <dbReference type="Rhea" id="RHEA:20984"/>
        <dbReference type="ChEBI" id="CHEBI:15354"/>
        <dbReference type="ChEBI" id="CHEBI:15377"/>
        <dbReference type="ChEBI" id="CHEBI:15378"/>
        <dbReference type="ChEBI" id="CHEBI:17636"/>
        <dbReference type="ChEBI" id="CHEBI:57674"/>
        <dbReference type="EC" id="3.1.4.41"/>
    </reaction>
</comment>
<comment type="catalytic activity">
    <reaction evidence="1">
        <text>1-(9Z-octadecenoyl)-sn-glycero-3-phosphocholine + H2O = 1-(9Z-octadecenoyl)-sn-glycero-3-phosphate + choline + H(+)</text>
        <dbReference type="Rhea" id="RHEA:38915"/>
        <dbReference type="ChEBI" id="CHEBI:15354"/>
        <dbReference type="ChEBI" id="CHEBI:15377"/>
        <dbReference type="ChEBI" id="CHEBI:15378"/>
        <dbReference type="ChEBI" id="CHEBI:28610"/>
        <dbReference type="ChEBI" id="CHEBI:74544"/>
    </reaction>
</comment>
<comment type="catalytic activity">
    <reaction evidence="1">
        <text>1-O-hexadecyl-sn-glycero-3-phosphocholine + H2O = 1-O-hexadecyl-sn-glycero-3-phosphate + choline + H(+)</text>
        <dbReference type="Rhea" id="RHEA:41143"/>
        <dbReference type="ChEBI" id="CHEBI:15354"/>
        <dbReference type="ChEBI" id="CHEBI:15377"/>
        <dbReference type="ChEBI" id="CHEBI:15378"/>
        <dbReference type="ChEBI" id="CHEBI:64496"/>
        <dbReference type="ChEBI" id="CHEBI:77580"/>
    </reaction>
</comment>
<comment type="cofactor">
    <cofactor evidence="1">
        <name>Mg(2+)</name>
        <dbReference type="ChEBI" id="CHEBI:18420"/>
    </cofactor>
</comment>
<comment type="similarity">
    <text evidence="3">Belongs to the sphingomyelinase D/phospholipase D family.</text>
</comment>
<comment type="sequence caution" evidence="3">
    <conflict type="erroneous initiation">
        <sequence resource="EMBL-CDS" id="AAA21882"/>
    </conflict>
    <text>Extended N-terminus.</text>
</comment>
<comment type="sequence caution" evidence="3">
    <conflict type="erroneous initiation">
        <sequence resource="EMBL-CDS" id="ADH92813"/>
    </conflict>
    <text>Extended N-terminus.</text>
</comment>
<keyword id="KW-0378">Hydrolase</keyword>
<keyword id="KW-0442">Lipid degradation</keyword>
<keyword id="KW-0443">Lipid metabolism</keyword>
<keyword id="KW-1185">Reference proteome</keyword>
<keyword id="KW-0732">Signal</keyword>
<keyword id="KW-0843">Virulence</keyword>
<evidence type="ECO:0000250" key="1">
    <source>
        <dbReference type="UniProtKB" id="P20626"/>
    </source>
</evidence>
<evidence type="ECO:0000255" key="2"/>
<evidence type="ECO:0000305" key="3"/>
<reference key="1">
    <citation type="journal article" date="1993" name="Infect. Immun.">
        <title>Arcanobacterium haemolyticum phospholipase D is genetically and functionally similar to Corynebacterium pseudotuberculosis phospholipase D.</title>
        <authorList>
            <person name="Cuevas W.A."/>
            <person name="Songer J.G."/>
        </authorList>
    </citation>
    <scope>NUCLEOTIDE SEQUENCE [GENOMIC DNA]</scope>
</reference>
<reference key="2">
    <citation type="journal article" date="2010" name="Stand. Genomic Sci.">
        <title>Complete genome sequence of Arcanobacterium haemolyticum type strain (11018).</title>
        <authorList>
            <person name="Yasawong M."/>
            <person name="Teshima H."/>
            <person name="Lapidus A."/>
            <person name="Nolan M."/>
            <person name="Lucas S."/>
            <person name="Glavina Del Rio T."/>
            <person name="Tice H."/>
            <person name="Cheng J.F."/>
            <person name="Bruce D."/>
            <person name="Detter C."/>
            <person name="Tapia R."/>
            <person name="Han C."/>
            <person name="Goodwin L."/>
            <person name="Pitluck S."/>
            <person name="Liolios K."/>
            <person name="Ivanova N."/>
            <person name="Mavromatis K."/>
            <person name="Mikhailova N."/>
            <person name="Pati A."/>
            <person name="Chen A."/>
            <person name="Palaniappan K."/>
            <person name="Land M."/>
            <person name="Hauser L."/>
            <person name="Chang Y.J."/>
            <person name="Jeffries C.D."/>
            <person name="Rohde M."/>
            <person name="Sikorski J."/>
            <person name="Pukall R."/>
            <person name="Goker M."/>
            <person name="Woyke T."/>
            <person name="Bristow J."/>
            <person name="Eisen J.A."/>
            <person name="Markowitz V."/>
            <person name="Hugenholtz P."/>
            <person name="Kyrpides N.C."/>
            <person name="Klenk H.P."/>
        </authorList>
    </citation>
    <scope>NUCLEOTIDE SEQUENCE [LARGE SCALE GENOMIC DNA]</scope>
    <source>
        <strain>ATCC 9345 / DSM 20595 / CCM 5947 / CCUG 17215 / LMG 16163 / NBRC 15585 / NCTC 8452 / 11018</strain>
    </source>
</reference>
<gene>
    <name type="primary">pld</name>
    <name type="ordered locus">Arch_1099</name>
</gene>
<name>PLD_ARCHD</name>
<dbReference type="EC" id="3.1.4.-" evidence="1"/>
<dbReference type="EC" id="3.1.4.41" evidence="1"/>
<dbReference type="EMBL" id="L16583">
    <property type="protein sequence ID" value="AAA21882.1"/>
    <property type="status" value="ALT_INIT"/>
    <property type="molecule type" value="Genomic_DNA"/>
</dbReference>
<dbReference type="EMBL" id="CP002045">
    <property type="protein sequence ID" value="ADH92813.1"/>
    <property type="status" value="ALT_INIT"/>
    <property type="molecule type" value="Genomic_DNA"/>
</dbReference>
<dbReference type="PIR" id="I39484">
    <property type="entry name" value="I39484"/>
</dbReference>
<dbReference type="RefSeq" id="WP_041640381.1">
    <property type="nucleotide sequence ID" value="NC_014218.1"/>
</dbReference>
<dbReference type="STRING" id="644284.Arch_1099"/>
<dbReference type="KEGG" id="ahe:Arch_1099"/>
<dbReference type="eggNOG" id="ENOG502ZB0H">
    <property type="taxonomic scope" value="Bacteria"/>
</dbReference>
<dbReference type="HOGENOM" id="CLU_059400_0_0_11"/>
<dbReference type="OrthoDB" id="5148758at2"/>
<dbReference type="Proteomes" id="UP000000376">
    <property type="component" value="Chromosome"/>
</dbReference>
<dbReference type="GO" id="GO:0050290">
    <property type="term" value="F:sphingomyelin phosphodiesterase D activity"/>
    <property type="evidence" value="ECO:0007669"/>
    <property type="project" value="UniProtKB-EC"/>
</dbReference>
<dbReference type="GO" id="GO:0016042">
    <property type="term" value="P:lipid catabolic process"/>
    <property type="evidence" value="ECO:0007669"/>
    <property type="project" value="UniProtKB-KW"/>
</dbReference>
<dbReference type="Gene3D" id="3.20.20.190">
    <property type="entry name" value="Phosphatidylinositol (PI) phosphodiesterase"/>
    <property type="match status" value="1"/>
</dbReference>
<dbReference type="InterPro" id="IPR017946">
    <property type="entry name" value="PLC-like_Pdiesterase_TIM-brl"/>
</dbReference>
<dbReference type="InterPro" id="IPR016674">
    <property type="entry name" value="SMase_D/PLipase_D"/>
</dbReference>
<dbReference type="PIRSF" id="PIRSF016632">
    <property type="entry name" value="Phospholipase_actinobac/fun"/>
    <property type="match status" value="1"/>
</dbReference>
<dbReference type="SUPFAM" id="SSF51695">
    <property type="entry name" value="PLC-like phosphodiesterases"/>
    <property type="match status" value="1"/>
</dbReference>